<name>BRM1L_XENTR</name>
<evidence type="ECO:0000250" key="1"/>
<evidence type="ECO:0000255" key="2"/>
<evidence type="ECO:0000256" key="3">
    <source>
        <dbReference type="SAM" id="MobiDB-lite"/>
    </source>
</evidence>
<evidence type="ECO:0000305" key="4"/>
<proteinExistence type="evidence at transcript level"/>
<feature type="chain" id="PRO_0000305314" description="Breast cancer metastasis-suppressor 1-like protein">
    <location>
        <begin position="1"/>
        <end position="322"/>
    </location>
</feature>
<feature type="region of interest" description="Disordered" evidence="3">
    <location>
        <begin position="1"/>
        <end position="56"/>
    </location>
</feature>
<feature type="coiled-coil region" evidence="2">
    <location>
        <begin position="50"/>
        <end position="82"/>
    </location>
</feature>
<feature type="coiled-coil region" evidence="2">
    <location>
        <begin position="147"/>
        <end position="178"/>
    </location>
</feature>
<feature type="compositionally biased region" description="Basic and acidic residues" evidence="3">
    <location>
        <begin position="1"/>
        <end position="16"/>
    </location>
</feature>
<feature type="compositionally biased region" description="Acidic residues" evidence="3">
    <location>
        <begin position="17"/>
        <end position="51"/>
    </location>
</feature>
<reference key="1">
    <citation type="submission" date="2007-03" db="EMBL/GenBank/DDBJ databases">
        <authorList>
            <consortium name="NIH - Xenopus Gene Collection (XGC) project"/>
        </authorList>
    </citation>
    <scope>NUCLEOTIDE SEQUENCE [LARGE SCALE MRNA]</scope>
    <source>
        <tissue>Embryo</tissue>
    </source>
</reference>
<organism>
    <name type="scientific">Xenopus tropicalis</name>
    <name type="common">Western clawed frog</name>
    <name type="synonym">Silurana tropicalis</name>
    <dbReference type="NCBI Taxonomy" id="8364"/>
    <lineage>
        <taxon>Eukaryota</taxon>
        <taxon>Metazoa</taxon>
        <taxon>Chordata</taxon>
        <taxon>Craniata</taxon>
        <taxon>Vertebrata</taxon>
        <taxon>Euteleostomi</taxon>
        <taxon>Amphibia</taxon>
        <taxon>Batrachia</taxon>
        <taxon>Anura</taxon>
        <taxon>Pipoidea</taxon>
        <taxon>Pipidae</taxon>
        <taxon>Xenopodinae</taxon>
        <taxon>Xenopus</taxon>
        <taxon>Silurana</taxon>
    </lineage>
</organism>
<comment type="function">
    <text evidence="1">Involved in the histone deacetylase (HDAC1)-dependent transcriptional repression activity.</text>
</comment>
<comment type="subcellular location">
    <subcellularLocation>
        <location evidence="1">Nucleus</location>
    </subcellularLocation>
</comment>
<comment type="similarity">
    <text evidence="4">Belongs to the BRMS1 family.</text>
</comment>
<gene>
    <name type="primary">brms1l</name>
</gene>
<sequence length="322" mass="37541">MPVHSREKKESNHNDMEVDYPENEGTSSEEDDSDSSSGSEEGDSSEMDDEDCERRRMECLDEMSNLEKQFTDLKDQLYKERLSQVDAKLQEVIAGKAPEYLEPLANLQENMQIRTKVAGIYRELCLESVKNKHDCEIQAARQHCESEKLLLYDTVQSELEEKIRRLEEDRHSIDITSELWNDELQSRRKRKDPFSPDKKKKPVVVSGPYIVYMLQDLDILEDWTTIRKAMASFGPHRVKPEVTVKMEKHQHSARSEEGRLHYDGEWYGRGQTICIDKKDEFPTSAVITTINSDEVWFKRQDGSKSKLYISQLQKGKYSIKHI</sequence>
<dbReference type="EMBL" id="BC135888">
    <property type="protein sequence ID" value="AAI35889.1"/>
    <property type="molecule type" value="mRNA"/>
</dbReference>
<dbReference type="RefSeq" id="NP_001096366.1">
    <property type="nucleotide sequence ID" value="NM_001102896.2"/>
</dbReference>
<dbReference type="SMR" id="A4II71"/>
<dbReference type="FunCoup" id="A4II71">
    <property type="interactions" value="2160"/>
</dbReference>
<dbReference type="STRING" id="8364.ENSXETP00000050324"/>
<dbReference type="PaxDb" id="8364-ENSXETP00000058775"/>
<dbReference type="GeneID" id="100124958"/>
<dbReference type="KEGG" id="xtr:100124958"/>
<dbReference type="AGR" id="Xenbase:XB-GENE-1002972"/>
<dbReference type="CTD" id="84312"/>
<dbReference type="Xenbase" id="XB-GENE-1002972">
    <property type="gene designation" value="brms1l"/>
</dbReference>
<dbReference type="eggNOG" id="KOG4466">
    <property type="taxonomic scope" value="Eukaryota"/>
</dbReference>
<dbReference type="InParanoid" id="A4II71"/>
<dbReference type="OMA" id="XIYRELC"/>
<dbReference type="OrthoDB" id="20886at2759"/>
<dbReference type="Proteomes" id="UP000008143">
    <property type="component" value="Chromosome 8"/>
</dbReference>
<dbReference type="Bgee" id="ENSXETG00000002912">
    <property type="expression patterns" value="Expressed in egg cell and 13 other cell types or tissues"/>
</dbReference>
<dbReference type="GO" id="GO:0005654">
    <property type="term" value="C:nucleoplasm"/>
    <property type="evidence" value="ECO:0007669"/>
    <property type="project" value="UniProtKB-ARBA"/>
</dbReference>
<dbReference type="FunFam" id="1.20.5.1500:FF:000002">
    <property type="entry name" value="breast cancer metastasis-suppressor 1-like protein-A"/>
    <property type="match status" value="1"/>
</dbReference>
<dbReference type="Gene3D" id="1.20.5.1500">
    <property type="match status" value="1"/>
</dbReference>
<dbReference type="InterPro" id="IPR013907">
    <property type="entry name" value="Sds3"/>
</dbReference>
<dbReference type="PANTHER" id="PTHR21964">
    <property type="entry name" value="BREAST CANCER METASTASIS-SUPPRESSOR 1"/>
    <property type="match status" value="1"/>
</dbReference>
<dbReference type="Pfam" id="PF08598">
    <property type="entry name" value="Sds3"/>
    <property type="match status" value="1"/>
</dbReference>
<dbReference type="SMART" id="SM01401">
    <property type="entry name" value="Sds3"/>
    <property type="match status" value="1"/>
</dbReference>
<keyword id="KW-0175">Coiled coil</keyword>
<keyword id="KW-0539">Nucleus</keyword>
<keyword id="KW-1185">Reference proteome</keyword>
<keyword id="KW-0678">Repressor</keyword>
<keyword id="KW-0804">Transcription</keyword>
<keyword id="KW-0805">Transcription regulation</keyword>
<protein>
    <recommendedName>
        <fullName>Breast cancer metastasis-suppressor 1-like protein</fullName>
    </recommendedName>
</protein>
<accession>A4II71</accession>